<sequence length="73" mass="7366">MVEIQTGLRENTVGAVEQFAEIASIDPLVASMILSGAIIITVAVVAFGALTLGAIGASIKRGLSGSEEPNQPA</sequence>
<name>YA57_NATPD</name>
<keyword id="KW-0472">Membrane</keyword>
<keyword id="KW-1185">Reference proteome</keyword>
<keyword id="KW-0812">Transmembrane</keyword>
<keyword id="KW-1133">Transmembrane helix</keyword>
<evidence type="ECO:0000255" key="1"/>
<evidence type="ECO:0000305" key="2"/>
<comment type="subcellular location">
    <subcellularLocation>
        <location evidence="2">Membrane</location>
        <topology evidence="2">Single-pass membrane protein</topology>
    </subcellularLocation>
</comment>
<protein>
    <recommendedName>
        <fullName>Uncharacterized protein NP_1057A</fullName>
    </recommendedName>
</protein>
<feature type="chain" id="PRO_0000076365" description="Uncharacterized protein NP_1057A">
    <location>
        <begin position="1"/>
        <end position="73"/>
    </location>
</feature>
<feature type="transmembrane region" description="Helical" evidence="1">
    <location>
        <begin position="37"/>
        <end position="57"/>
    </location>
</feature>
<gene>
    <name type="ordered locus">NP_1057A</name>
    <name type="ORF">NP1057E</name>
</gene>
<reference key="1">
    <citation type="journal article" date="2005" name="Genome Res.">
        <title>Living with two extremes: conclusions from the genome sequence of Natronomonas pharaonis.</title>
        <authorList>
            <person name="Falb M."/>
            <person name="Pfeiffer F."/>
            <person name="Palm P."/>
            <person name="Rodewald K."/>
            <person name="Hickmann V."/>
            <person name="Tittor J."/>
            <person name="Oesterhelt D."/>
        </authorList>
    </citation>
    <scope>NUCLEOTIDE SEQUENCE [LARGE SCALE GENOMIC DNA]</scope>
    <source>
        <strain>ATCC 35678 / DSM 2160 / CIP 103997 / JCM 8858 / NBRC 14720 / NCIMB 2260 / Gabara</strain>
    </source>
</reference>
<proteinExistence type="predicted"/>
<dbReference type="EMBL" id="CR936257">
    <property type="protein sequence ID" value="CAJ32463.1"/>
    <property type="molecule type" value="Genomic_DNA"/>
</dbReference>
<dbReference type="RefSeq" id="WP_011322255.1">
    <property type="nucleotide sequence ID" value="NC_007426.1"/>
</dbReference>
<dbReference type="SMR" id="Q3IUT9"/>
<dbReference type="EnsemblBacteria" id="CAJ32463">
    <property type="protein sequence ID" value="CAJ32463"/>
    <property type="gene ID" value="NP_1057E"/>
</dbReference>
<dbReference type="GeneID" id="3701042"/>
<dbReference type="KEGG" id="nph:NP_1057E"/>
<dbReference type="eggNOG" id="arCOG09322">
    <property type="taxonomic scope" value="Archaea"/>
</dbReference>
<dbReference type="HOGENOM" id="CLU_2695878_0_0_2"/>
<dbReference type="OrthoDB" id="211838at2157"/>
<dbReference type="Proteomes" id="UP000002698">
    <property type="component" value="Chromosome"/>
</dbReference>
<dbReference type="GO" id="GO:0016020">
    <property type="term" value="C:membrane"/>
    <property type="evidence" value="ECO:0007669"/>
    <property type="project" value="UniProtKB-SubCell"/>
</dbReference>
<accession>Q3IUT9</accession>
<organism>
    <name type="scientific">Natronomonas pharaonis (strain ATCC 35678 / DSM 2160 / CIP 103997 / JCM 8858 / NBRC 14720 / NCIMB 2260 / Gabara)</name>
    <name type="common">Halobacterium pharaonis</name>
    <dbReference type="NCBI Taxonomy" id="348780"/>
    <lineage>
        <taxon>Archaea</taxon>
        <taxon>Methanobacteriati</taxon>
        <taxon>Methanobacteriota</taxon>
        <taxon>Stenosarchaea group</taxon>
        <taxon>Halobacteria</taxon>
        <taxon>Halobacteriales</taxon>
        <taxon>Haloarculaceae</taxon>
        <taxon>Natronomonas</taxon>
    </lineage>
</organism>